<gene>
    <name evidence="1" type="primary">aroE</name>
    <name type="ordered locus">CGSHiGG_06560</name>
</gene>
<feature type="chain" id="PRO_1000100122" description="Shikimate dehydrogenase (NADP(+))">
    <location>
        <begin position="1"/>
        <end position="268"/>
    </location>
</feature>
<feature type="active site" description="Proton acceptor" evidence="1">
    <location>
        <position position="65"/>
    </location>
</feature>
<feature type="binding site" evidence="1">
    <location>
        <begin position="14"/>
        <end position="16"/>
    </location>
    <ligand>
        <name>shikimate</name>
        <dbReference type="ChEBI" id="CHEBI:36208"/>
    </ligand>
</feature>
<feature type="binding site" evidence="1">
    <location>
        <position position="61"/>
    </location>
    <ligand>
        <name>shikimate</name>
        <dbReference type="ChEBI" id="CHEBI:36208"/>
    </ligand>
</feature>
<feature type="binding site" evidence="1">
    <location>
        <position position="86"/>
    </location>
    <ligand>
        <name>shikimate</name>
        <dbReference type="ChEBI" id="CHEBI:36208"/>
    </ligand>
</feature>
<feature type="binding site" evidence="1">
    <location>
        <position position="102"/>
    </location>
    <ligand>
        <name>shikimate</name>
        <dbReference type="ChEBI" id="CHEBI:36208"/>
    </ligand>
</feature>
<feature type="binding site" evidence="1">
    <location>
        <begin position="126"/>
        <end position="130"/>
    </location>
    <ligand>
        <name>NADP(+)</name>
        <dbReference type="ChEBI" id="CHEBI:58349"/>
    </ligand>
</feature>
<feature type="binding site" evidence="1">
    <location>
        <begin position="149"/>
        <end position="154"/>
    </location>
    <ligand>
        <name>NADP(+)</name>
        <dbReference type="ChEBI" id="CHEBI:58349"/>
    </ligand>
</feature>
<feature type="binding site" evidence="1">
    <location>
        <position position="213"/>
    </location>
    <ligand>
        <name>NADP(+)</name>
        <dbReference type="ChEBI" id="CHEBI:58349"/>
    </ligand>
</feature>
<feature type="binding site" evidence="1">
    <location>
        <position position="215"/>
    </location>
    <ligand>
        <name>shikimate</name>
        <dbReference type="ChEBI" id="CHEBI:36208"/>
    </ligand>
</feature>
<feature type="binding site" evidence="1">
    <location>
        <position position="238"/>
    </location>
    <ligand>
        <name>NADP(+)</name>
        <dbReference type="ChEBI" id="CHEBI:58349"/>
    </ligand>
</feature>
<comment type="function">
    <text evidence="1">Involved in the biosynthesis of the chorismate, which leads to the biosynthesis of aromatic amino acids. Catalyzes the reversible NADPH linked reduction of 3-dehydroshikimate (DHSA) to yield shikimate (SA).</text>
</comment>
<comment type="catalytic activity">
    <reaction evidence="1">
        <text>shikimate + NADP(+) = 3-dehydroshikimate + NADPH + H(+)</text>
        <dbReference type="Rhea" id="RHEA:17737"/>
        <dbReference type="ChEBI" id="CHEBI:15378"/>
        <dbReference type="ChEBI" id="CHEBI:16630"/>
        <dbReference type="ChEBI" id="CHEBI:36208"/>
        <dbReference type="ChEBI" id="CHEBI:57783"/>
        <dbReference type="ChEBI" id="CHEBI:58349"/>
        <dbReference type="EC" id="1.1.1.25"/>
    </reaction>
</comment>
<comment type="pathway">
    <text evidence="1">Metabolic intermediate biosynthesis; chorismate biosynthesis; chorismate from D-erythrose 4-phosphate and phosphoenolpyruvate: step 4/7.</text>
</comment>
<comment type="subunit">
    <text evidence="1">Homodimer.</text>
</comment>
<comment type="similarity">
    <text evidence="1">Belongs to the shikimate dehydrogenase family.</text>
</comment>
<dbReference type="EC" id="1.1.1.25" evidence="1"/>
<dbReference type="EMBL" id="CP000672">
    <property type="protein sequence ID" value="ABR00204.1"/>
    <property type="molecule type" value="Genomic_DNA"/>
</dbReference>
<dbReference type="SMR" id="A5UHE8"/>
<dbReference type="KEGG" id="hiq:CGSHiGG_06560"/>
<dbReference type="HOGENOM" id="CLU_044063_2_1_6"/>
<dbReference type="UniPathway" id="UPA00053">
    <property type="reaction ID" value="UER00087"/>
</dbReference>
<dbReference type="Proteomes" id="UP000001990">
    <property type="component" value="Chromosome"/>
</dbReference>
<dbReference type="GO" id="GO:0005829">
    <property type="term" value="C:cytosol"/>
    <property type="evidence" value="ECO:0007669"/>
    <property type="project" value="TreeGrafter"/>
</dbReference>
<dbReference type="GO" id="GO:0050661">
    <property type="term" value="F:NADP binding"/>
    <property type="evidence" value="ECO:0007669"/>
    <property type="project" value="InterPro"/>
</dbReference>
<dbReference type="GO" id="GO:0004764">
    <property type="term" value="F:shikimate 3-dehydrogenase (NADP+) activity"/>
    <property type="evidence" value="ECO:0007669"/>
    <property type="project" value="UniProtKB-UniRule"/>
</dbReference>
<dbReference type="GO" id="GO:0008652">
    <property type="term" value="P:amino acid biosynthetic process"/>
    <property type="evidence" value="ECO:0007669"/>
    <property type="project" value="UniProtKB-KW"/>
</dbReference>
<dbReference type="GO" id="GO:0009073">
    <property type="term" value="P:aromatic amino acid family biosynthetic process"/>
    <property type="evidence" value="ECO:0007669"/>
    <property type="project" value="UniProtKB-KW"/>
</dbReference>
<dbReference type="GO" id="GO:0009423">
    <property type="term" value="P:chorismate biosynthetic process"/>
    <property type="evidence" value="ECO:0007669"/>
    <property type="project" value="UniProtKB-UniRule"/>
</dbReference>
<dbReference type="GO" id="GO:0019632">
    <property type="term" value="P:shikimate metabolic process"/>
    <property type="evidence" value="ECO:0007669"/>
    <property type="project" value="InterPro"/>
</dbReference>
<dbReference type="CDD" id="cd01065">
    <property type="entry name" value="NAD_bind_Shikimate_DH"/>
    <property type="match status" value="1"/>
</dbReference>
<dbReference type="FunFam" id="3.40.50.10860:FF:000006">
    <property type="entry name" value="Shikimate dehydrogenase (NADP(+))"/>
    <property type="match status" value="1"/>
</dbReference>
<dbReference type="Gene3D" id="3.40.50.10860">
    <property type="entry name" value="Leucine Dehydrogenase, chain A, domain 1"/>
    <property type="match status" value="1"/>
</dbReference>
<dbReference type="Gene3D" id="3.40.50.720">
    <property type="entry name" value="NAD(P)-binding Rossmann-like Domain"/>
    <property type="match status" value="1"/>
</dbReference>
<dbReference type="HAMAP" id="MF_00222">
    <property type="entry name" value="Shikimate_DH_AroE"/>
    <property type="match status" value="1"/>
</dbReference>
<dbReference type="InterPro" id="IPR046346">
    <property type="entry name" value="Aminoacid_DH-like_N_sf"/>
</dbReference>
<dbReference type="InterPro" id="IPR036291">
    <property type="entry name" value="NAD(P)-bd_dom_sf"/>
</dbReference>
<dbReference type="InterPro" id="IPR041121">
    <property type="entry name" value="SDH_C"/>
</dbReference>
<dbReference type="InterPro" id="IPR011342">
    <property type="entry name" value="Shikimate_DH"/>
</dbReference>
<dbReference type="InterPro" id="IPR013708">
    <property type="entry name" value="Shikimate_DH-bd_N"/>
</dbReference>
<dbReference type="InterPro" id="IPR022893">
    <property type="entry name" value="Shikimate_DH_fam"/>
</dbReference>
<dbReference type="InterPro" id="IPR006151">
    <property type="entry name" value="Shikm_DH/Glu-tRNA_Rdtase"/>
</dbReference>
<dbReference type="NCBIfam" id="TIGR00507">
    <property type="entry name" value="aroE"/>
    <property type="match status" value="1"/>
</dbReference>
<dbReference type="NCBIfam" id="NF001310">
    <property type="entry name" value="PRK00258.1-2"/>
    <property type="match status" value="1"/>
</dbReference>
<dbReference type="PANTHER" id="PTHR21089:SF1">
    <property type="entry name" value="BIFUNCTIONAL 3-DEHYDROQUINATE DEHYDRATASE_SHIKIMATE DEHYDROGENASE, CHLOROPLASTIC"/>
    <property type="match status" value="1"/>
</dbReference>
<dbReference type="PANTHER" id="PTHR21089">
    <property type="entry name" value="SHIKIMATE DEHYDROGENASE"/>
    <property type="match status" value="1"/>
</dbReference>
<dbReference type="Pfam" id="PF18317">
    <property type="entry name" value="SDH_C"/>
    <property type="match status" value="1"/>
</dbReference>
<dbReference type="Pfam" id="PF01488">
    <property type="entry name" value="Shikimate_DH"/>
    <property type="match status" value="1"/>
</dbReference>
<dbReference type="Pfam" id="PF08501">
    <property type="entry name" value="Shikimate_dh_N"/>
    <property type="match status" value="1"/>
</dbReference>
<dbReference type="SUPFAM" id="SSF53223">
    <property type="entry name" value="Aminoacid dehydrogenase-like, N-terminal domain"/>
    <property type="match status" value="1"/>
</dbReference>
<dbReference type="SUPFAM" id="SSF51735">
    <property type="entry name" value="NAD(P)-binding Rossmann-fold domains"/>
    <property type="match status" value="1"/>
</dbReference>
<evidence type="ECO:0000255" key="1">
    <source>
        <dbReference type="HAMAP-Rule" id="MF_00222"/>
    </source>
</evidence>
<accession>A5UHE8</accession>
<sequence>MDLYAVWGNPIVQSKSPLIQNKLATQTHQTIEYIAKLGDLDAFEQQLLAFFEEGAKGCNITSPFKERAYQLADEYSQRAKLAEACNTLKKLDDGKLYADNTDGIGLVTDLERLNWLRPNQRVLILGAGGATKGVLLPLLQAQQNIVLANRTFLKAKELAERFQPYGNIQAASMDSIPLQTYDVVINATSAGLSGGTAPVDAEILKLGSAFYDMQYTKGTDTPFIALCKSLGLTNISDGFGMLVAQAAHSFHLWRGVMPNFVAVYEQLK</sequence>
<reference key="1">
    <citation type="journal article" date="2007" name="Genome Biol.">
        <title>Characterization and modeling of the Haemophilus influenzae core and supragenomes based on the complete genomic sequences of Rd and 12 clinical nontypeable strains.</title>
        <authorList>
            <person name="Hogg J.S."/>
            <person name="Hu F.Z."/>
            <person name="Janto B."/>
            <person name="Boissy R."/>
            <person name="Hayes J."/>
            <person name="Keefe R."/>
            <person name="Post J.C."/>
            <person name="Ehrlich G.D."/>
        </authorList>
    </citation>
    <scope>NUCLEOTIDE SEQUENCE [LARGE SCALE GENOMIC DNA]</scope>
    <source>
        <strain>PittGG</strain>
    </source>
</reference>
<name>AROE_HAEIG</name>
<proteinExistence type="inferred from homology"/>
<protein>
    <recommendedName>
        <fullName evidence="1">Shikimate dehydrogenase (NADP(+))</fullName>
        <shortName evidence="1">SDH</shortName>
        <ecNumber evidence="1">1.1.1.25</ecNumber>
    </recommendedName>
</protein>
<keyword id="KW-0028">Amino-acid biosynthesis</keyword>
<keyword id="KW-0057">Aromatic amino acid biosynthesis</keyword>
<keyword id="KW-0521">NADP</keyword>
<keyword id="KW-0560">Oxidoreductase</keyword>
<organism>
    <name type="scientific">Haemophilus influenzae (strain PittGG)</name>
    <dbReference type="NCBI Taxonomy" id="374931"/>
    <lineage>
        <taxon>Bacteria</taxon>
        <taxon>Pseudomonadati</taxon>
        <taxon>Pseudomonadota</taxon>
        <taxon>Gammaproteobacteria</taxon>
        <taxon>Pasteurellales</taxon>
        <taxon>Pasteurellaceae</taxon>
        <taxon>Haemophilus</taxon>
    </lineage>
</organism>